<name>RL281_ARATH</name>
<reference key="1">
    <citation type="journal article" date="1999" name="Nature">
        <title>Sequence and analysis of chromosome 2 of the plant Arabidopsis thaliana.</title>
        <authorList>
            <person name="Lin X."/>
            <person name="Kaul S."/>
            <person name="Rounsley S.D."/>
            <person name="Shea T.P."/>
            <person name="Benito M.-I."/>
            <person name="Town C.D."/>
            <person name="Fujii C.Y."/>
            <person name="Mason T.M."/>
            <person name="Bowman C.L."/>
            <person name="Barnstead M.E."/>
            <person name="Feldblyum T.V."/>
            <person name="Buell C.R."/>
            <person name="Ketchum K.A."/>
            <person name="Lee J.J."/>
            <person name="Ronning C.M."/>
            <person name="Koo H.L."/>
            <person name="Moffat K.S."/>
            <person name="Cronin L.A."/>
            <person name="Shen M."/>
            <person name="Pai G."/>
            <person name="Van Aken S."/>
            <person name="Umayam L."/>
            <person name="Tallon L.J."/>
            <person name="Gill J.E."/>
            <person name="Adams M.D."/>
            <person name="Carrera A.J."/>
            <person name="Creasy T.H."/>
            <person name="Goodman H.M."/>
            <person name="Somerville C.R."/>
            <person name="Copenhaver G.P."/>
            <person name="Preuss D."/>
            <person name="Nierman W.C."/>
            <person name="White O."/>
            <person name="Eisen J.A."/>
            <person name="Salzberg S.L."/>
            <person name="Fraser C.M."/>
            <person name="Venter J.C."/>
        </authorList>
    </citation>
    <scope>NUCLEOTIDE SEQUENCE [LARGE SCALE GENOMIC DNA]</scope>
    <source>
        <strain>cv. Columbia</strain>
    </source>
</reference>
<reference key="2">
    <citation type="journal article" date="2017" name="Plant J.">
        <title>Araport11: a complete reannotation of the Arabidopsis thaliana reference genome.</title>
        <authorList>
            <person name="Cheng C.Y."/>
            <person name="Krishnakumar V."/>
            <person name="Chan A.P."/>
            <person name="Thibaud-Nissen F."/>
            <person name="Schobel S."/>
            <person name="Town C.D."/>
        </authorList>
    </citation>
    <scope>GENOME REANNOTATION</scope>
    <source>
        <strain>cv. Columbia</strain>
    </source>
</reference>
<reference key="3">
    <citation type="journal article" date="2003" name="Science">
        <title>Empirical analysis of transcriptional activity in the Arabidopsis genome.</title>
        <authorList>
            <person name="Yamada K."/>
            <person name="Lim J."/>
            <person name="Dale J.M."/>
            <person name="Chen H."/>
            <person name="Shinn P."/>
            <person name="Palm C.J."/>
            <person name="Southwick A.M."/>
            <person name="Wu H.C."/>
            <person name="Kim C.J."/>
            <person name="Nguyen M."/>
            <person name="Pham P.K."/>
            <person name="Cheuk R.F."/>
            <person name="Karlin-Newmann G."/>
            <person name="Liu S.X."/>
            <person name="Lam B."/>
            <person name="Sakano H."/>
            <person name="Wu T."/>
            <person name="Yu G."/>
            <person name="Miranda M."/>
            <person name="Quach H.L."/>
            <person name="Tripp M."/>
            <person name="Chang C.H."/>
            <person name="Lee J.M."/>
            <person name="Toriumi M.J."/>
            <person name="Chan M.M."/>
            <person name="Tang C.C."/>
            <person name="Onodera C.S."/>
            <person name="Deng J.M."/>
            <person name="Akiyama K."/>
            <person name="Ansari Y."/>
            <person name="Arakawa T."/>
            <person name="Banh J."/>
            <person name="Banno F."/>
            <person name="Bowser L."/>
            <person name="Brooks S.Y."/>
            <person name="Carninci P."/>
            <person name="Chao Q."/>
            <person name="Choy N."/>
            <person name="Enju A."/>
            <person name="Goldsmith A.D."/>
            <person name="Gurjal M."/>
            <person name="Hansen N.F."/>
            <person name="Hayashizaki Y."/>
            <person name="Johnson-Hopson C."/>
            <person name="Hsuan V.W."/>
            <person name="Iida K."/>
            <person name="Karnes M."/>
            <person name="Khan S."/>
            <person name="Koesema E."/>
            <person name="Ishida J."/>
            <person name="Jiang P.X."/>
            <person name="Jones T."/>
            <person name="Kawai J."/>
            <person name="Kamiya A."/>
            <person name="Meyers C."/>
            <person name="Nakajima M."/>
            <person name="Narusaka M."/>
            <person name="Seki M."/>
            <person name="Sakurai T."/>
            <person name="Satou M."/>
            <person name="Tamse R."/>
            <person name="Vaysberg M."/>
            <person name="Wallender E.K."/>
            <person name="Wong C."/>
            <person name="Yamamura Y."/>
            <person name="Yuan S."/>
            <person name="Shinozaki K."/>
            <person name="Davis R.W."/>
            <person name="Theologis A."/>
            <person name="Ecker J.R."/>
        </authorList>
    </citation>
    <scope>NUCLEOTIDE SEQUENCE [LARGE SCALE MRNA]</scope>
    <source>
        <strain>cv. Columbia</strain>
    </source>
</reference>
<reference key="4">
    <citation type="journal article" date="2001" name="Plant Physiol.">
        <title>The organization of cytoplasmic ribosomal protein genes in the Arabidopsis genome.</title>
        <authorList>
            <person name="Barakat A."/>
            <person name="Szick-Miranda K."/>
            <person name="Chang I.-F."/>
            <person name="Guyot R."/>
            <person name="Blanc G."/>
            <person name="Cooke R."/>
            <person name="Delseny M."/>
            <person name="Bailey-Serres J."/>
        </authorList>
    </citation>
    <scope>GENE FAMILY ORGANIZATION</scope>
    <scope>NOMENCLATURE</scope>
</reference>
<reference key="5">
    <citation type="journal article" date="2007" name="Mol. Cell. Proteomics">
        <title>Multidimensional protein identification technology (MudPIT) analysis of ubiquitinated proteins in plants.</title>
        <authorList>
            <person name="Maor R."/>
            <person name="Jones A."/>
            <person name="Nuehse T.S."/>
            <person name="Studholme D.J."/>
            <person name="Peck S.C."/>
            <person name="Shirasu K."/>
        </authorList>
    </citation>
    <scope>IDENTIFICATION BY MASS SPECTROMETRY [LARGE SCALE ANALYSIS]</scope>
    <source>
        <strain>cv. Landsberg erecta</strain>
    </source>
</reference>
<reference key="6">
    <citation type="journal article" date="2008" name="Development">
        <title>Ribosomal proteins promote leaf adaxial identity.</title>
        <authorList>
            <person name="Yao Y."/>
            <person name="Ling Q."/>
            <person name="Wang H."/>
            <person name="Huang H."/>
        </authorList>
    </citation>
    <scope>FUNCTION</scope>
    <scope>DISRUPTION PHENOTYPE</scope>
    <scope>TISSUE SPECIFICITY</scope>
    <scope>DEVELOPMENTAL STAGE</scope>
    <scope>SUBCELLULAR LOCATION</scope>
    <source>
        <strain>cv. Columbia</strain>
        <strain>cv. Landsberg erecta</strain>
    </source>
</reference>
<reference key="7">
    <citation type="journal article" date="2023" name="Plant Cell">
        <title>An updated nomenclature for plant ribosomal protein genes.</title>
        <authorList>
            <person name="Scarpin M.R."/>
            <person name="Busche M."/>
            <person name="Martinez R.E."/>
            <person name="Harper L.C."/>
            <person name="Reiser L."/>
            <person name="Szakonyi D."/>
            <person name="Merchante C."/>
            <person name="Lan T."/>
            <person name="Xiong W."/>
            <person name="Mo B."/>
            <person name="Tang G."/>
            <person name="Chen X."/>
            <person name="Bailey-Serres J."/>
            <person name="Browning K.S."/>
            <person name="Brunkard J.O."/>
        </authorList>
    </citation>
    <scope>NOMENCLATURE</scope>
</reference>
<feature type="chain" id="PRO_0000244743" description="Large ribosomal subunit protein eL28z">
    <location>
        <begin position="1"/>
        <end position="143"/>
    </location>
</feature>
<proteinExistence type="evidence at protein level"/>
<evidence type="ECO:0000250" key="1">
    <source>
        <dbReference type="UniProtKB" id="P46779"/>
    </source>
</evidence>
<evidence type="ECO:0000269" key="2">
    <source>
    </source>
</evidence>
<evidence type="ECO:0000303" key="3">
    <source>
    </source>
</evidence>
<evidence type="ECO:0000303" key="4">
    <source>
    </source>
</evidence>
<evidence type="ECO:0000303" key="5">
    <source>
    </source>
</evidence>
<evidence type="ECO:0000305" key="6"/>
<evidence type="ECO:0000312" key="7">
    <source>
        <dbReference type="Araport" id="AT2G19730"/>
    </source>
</evidence>
<evidence type="ECO:0000312" key="8">
    <source>
        <dbReference type="EMBL" id="AAC62149.1"/>
    </source>
</evidence>
<organism>
    <name type="scientific">Arabidopsis thaliana</name>
    <name type="common">Mouse-ear cress</name>
    <dbReference type="NCBI Taxonomy" id="3702"/>
    <lineage>
        <taxon>Eukaryota</taxon>
        <taxon>Viridiplantae</taxon>
        <taxon>Streptophyta</taxon>
        <taxon>Embryophyta</taxon>
        <taxon>Tracheophyta</taxon>
        <taxon>Spermatophyta</taxon>
        <taxon>Magnoliopsida</taxon>
        <taxon>eudicotyledons</taxon>
        <taxon>Gunneridae</taxon>
        <taxon>Pentapetalae</taxon>
        <taxon>rosids</taxon>
        <taxon>malvids</taxon>
        <taxon>Brassicales</taxon>
        <taxon>Brassicaceae</taxon>
        <taxon>Camelineae</taxon>
        <taxon>Arabidopsis</taxon>
    </lineage>
</organism>
<keyword id="KW-0963">Cytoplasm</keyword>
<keyword id="KW-0539">Nucleus</keyword>
<keyword id="KW-1185">Reference proteome</keyword>
<keyword id="KW-0687">Ribonucleoprotein</keyword>
<keyword id="KW-0689">Ribosomal protein</keyword>
<accession>O82204</accession>
<dbReference type="EMBL" id="AC005169">
    <property type="protein sequence ID" value="AAC62149.1"/>
    <property type="molecule type" value="Genomic_DNA"/>
</dbReference>
<dbReference type="EMBL" id="CP002685">
    <property type="protein sequence ID" value="AEC06918.1"/>
    <property type="molecule type" value="Genomic_DNA"/>
</dbReference>
<dbReference type="EMBL" id="CP002685">
    <property type="protein sequence ID" value="AEC06919.1"/>
    <property type="molecule type" value="Genomic_DNA"/>
</dbReference>
<dbReference type="EMBL" id="CP002685">
    <property type="protein sequence ID" value="AEC06920.1"/>
    <property type="molecule type" value="Genomic_DNA"/>
</dbReference>
<dbReference type="EMBL" id="AY050769">
    <property type="protein sequence ID" value="AAK92704.1"/>
    <property type="molecule type" value="mRNA"/>
</dbReference>
<dbReference type="EMBL" id="AY079378">
    <property type="protein sequence ID" value="AAL85109.1"/>
    <property type="molecule type" value="mRNA"/>
</dbReference>
<dbReference type="PIR" id="D84580">
    <property type="entry name" value="D84580"/>
</dbReference>
<dbReference type="RefSeq" id="NP_001031374.1">
    <property type="nucleotide sequence ID" value="NM_001036297.2"/>
</dbReference>
<dbReference type="RefSeq" id="NP_001077920.1">
    <property type="nucleotide sequence ID" value="NM_001084451.1"/>
</dbReference>
<dbReference type="RefSeq" id="NP_179563.1">
    <property type="nucleotide sequence ID" value="NM_127531.4"/>
</dbReference>
<dbReference type="SMR" id="O82204"/>
<dbReference type="BioGRID" id="1847">
    <property type="interactions" value="8"/>
</dbReference>
<dbReference type="FunCoup" id="O82204">
    <property type="interactions" value="3370"/>
</dbReference>
<dbReference type="IntAct" id="O82204">
    <property type="interactions" value="3"/>
</dbReference>
<dbReference type="STRING" id="3702.O82204"/>
<dbReference type="iPTMnet" id="O82204"/>
<dbReference type="MetOSite" id="O82204"/>
<dbReference type="PaxDb" id="3702-AT2G19730.3"/>
<dbReference type="ProteomicsDB" id="225930"/>
<dbReference type="EnsemblPlants" id="AT2G19730.1">
    <property type="protein sequence ID" value="AT2G19730.1"/>
    <property type="gene ID" value="AT2G19730"/>
</dbReference>
<dbReference type="EnsemblPlants" id="AT2G19730.2">
    <property type="protein sequence ID" value="AT2G19730.2"/>
    <property type="gene ID" value="AT2G19730"/>
</dbReference>
<dbReference type="EnsemblPlants" id="AT2G19730.3">
    <property type="protein sequence ID" value="AT2G19730.3"/>
    <property type="gene ID" value="AT2G19730"/>
</dbReference>
<dbReference type="GeneID" id="816492"/>
<dbReference type="Gramene" id="AT2G19730.1">
    <property type="protein sequence ID" value="AT2G19730.1"/>
    <property type="gene ID" value="AT2G19730"/>
</dbReference>
<dbReference type="Gramene" id="AT2G19730.2">
    <property type="protein sequence ID" value="AT2G19730.2"/>
    <property type="gene ID" value="AT2G19730"/>
</dbReference>
<dbReference type="Gramene" id="AT2G19730.3">
    <property type="protein sequence ID" value="AT2G19730.3"/>
    <property type="gene ID" value="AT2G19730"/>
</dbReference>
<dbReference type="KEGG" id="ath:AT2G19730"/>
<dbReference type="Araport" id="AT2G19730"/>
<dbReference type="TAIR" id="AT2G19730"/>
<dbReference type="eggNOG" id="KOG3412">
    <property type="taxonomic scope" value="Eukaryota"/>
</dbReference>
<dbReference type="HOGENOM" id="CLU_106801_2_0_1"/>
<dbReference type="InParanoid" id="O82204"/>
<dbReference type="OMA" id="GKYGQRP"/>
<dbReference type="OrthoDB" id="338850at2759"/>
<dbReference type="PhylomeDB" id="O82204"/>
<dbReference type="CD-CODE" id="4299E36E">
    <property type="entry name" value="Nucleolus"/>
</dbReference>
<dbReference type="PRO" id="PR:O82204"/>
<dbReference type="Proteomes" id="UP000006548">
    <property type="component" value="Chromosome 2"/>
</dbReference>
<dbReference type="ExpressionAtlas" id="O82204">
    <property type="expression patterns" value="baseline and differential"/>
</dbReference>
<dbReference type="GO" id="GO:0009507">
    <property type="term" value="C:chloroplast"/>
    <property type="evidence" value="ECO:0007005"/>
    <property type="project" value="TAIR"/>
</dbReference>
<dbReference type="GO" id="GO:0005737">
    <property type="term" value="C:cytoplasm"/>
    <property type="evidence" value="ECO:0000314"/>
    <property type="project" value="UniProtKB"/>
</dbReference>
<dbReference type="GO" id="GO:0022625">
    <property type="term" value="C:cytosolic large ribosomal subunit"/>
    <property type="evidence" value="ECO:0007005"/>
    <property type="project" value="TAIR"/>
</dbReference>
<dbReference type="GO" id="GO:0022626">
    <property type="term" value="C:cytosolic ribosome"/>
    <property type="evidence" value="ECO:0007005"/>
    <property type="project" value="TAIR"/>
</dbReference>
<dbReference type="GO" id="GO:0005739">
    <property type="term" value="C:mitochondrion"/>
    <property type="evidence" value="ECO:0007005"/>
    <property type="project" value="TAIR"/>
</dbReference>
<dbReference type="GO" id="GO:0005730">
    <property type="term" value="C:nucleolus"/>
    <property type="evidence" value="ECO:0000314"/>
    <property type="project" value="UniProtKB"/>
</dbReference>
<dbReference type="GO" id="GO:0005654">
    <property type="term" value="C:nucleoplasm"/>
    <property type="evidence" value="ECO:0000314"/>
    <property type="project" value="UniProtKB"/>
</dbReference>
<dbReference type="GO" id="GO:0005634">
    <property type="term" value="C:nucleus"/>
    <property type="evidence" value="ECO:0000314"/>
    <property type="project" value="UniProtKB"/>
</dbReference>
<dbReference type="GO" id="GO:0009505">
    <property type="term" value="C:plant-type cell wall"/>
    <property type="evidence" value="ECO:0007005"/>
    <property type="project" value="TAIR"/>
</dbReference>
<dbReference type="GO" id="GO:0005886">
    <property type="term" value="C:plasma membrane"/>
    <property type="evidence" value="ECO:0007005"/>
    <property type="project" value="TAIR"/>
</dbReference>
<dbReference type="GO" id="GO:0009506">
    <property type="term" value="C:plasmodesma"/>
    <property type="evidence" value="ECO:0007005"/>
    <property type="project" value="TAIR"/>
</dbReference>
<dbReference type="GO" id="GO:0003729">
    <property type="term" value="F:mRNA binding"/>
    <property type="evidence" value="ECO:0000314"/>
    <property type="project" value="TAIR"/>
</dbReference>
<dbReference type="GO" id="GO:0003735">
    <property type="term" value="F:structural constituent of ribosome"/>
    <property type="evidence" value="ECO:0000314"/>
    <property type="project" value="CAFA"/>
</dbReference>
<dbReference type="GO" id="GO:0009955">
    <property type="term" value="P:adaxial/abaxial pattern specification"/>
    <property type="evidence" value="ECO:0000315"/>
    <property type="project" value="UniProtKB"/>
</dbReference>
<dbReference type="GO" id="GO:0009965">
    <property type="term" value="P:leaf morphogenesis"/>
    <property type="evidence" value="ECO:0000315"/>
    <property type="project" value="UniProtKB"/>
</dbReference>
<dbReference type="GO" id="GO:0006412">
    <property type="term" value="P:translation"/>
    <property type="evidence" value="ECO:0007669"/>
    <property type="project" value="InterPro"/>
</dbReference>
<dbReference type="FunFam" id="3.30.390.110:FF:000002">
    <property type="entry name" value="60S ribosomal protein L28"/>
    <property type="match status" value="1"/>
</dbReference>
<dbReference type="Gene3D" id="3.30.390.110">
    <property type="match status" value="1"/>
</dbReference>
<dbReference type="InterPro" id="IPR002672">
    <property type="entry name" value="Ribosomal_eL28"/>
</dbReference>
<dbReference type="InterPro" id="IPR029004">
    <property type="entry name" value="Ribosomal_eL28/Mak16"/>
</dbReference>
<dbReference type="PANTHER" id="PTHR10544">
    <property type="entry name" value="60S RIBOSOMAL PROTEIN L28"/>
    <property type="match status" value="1"/>
</dbReference>
<dbReference type="Pfam" id="PF01778">
    <property type="entry name" value="Ribosomal_L28e"/>
    <property type="match status" value="1"/>
</dbReference>
<sequence>MATVPGQLIWEIVKNNNCFLVKQFGRGNSKVQFSKETNNLTNVHSYKHSGLANKKTVTIQAADKDQAVVLATTKTKKQNKPKLSVNKSILKKEFPRMSKAVANQVVDNYYRPDLKKAALARLSAISKGLRVAKSGAKQRNRQA</sequence>
<gene>
    <name evidence="3" type="primary">RPL28A</name>
    <name evidence="4" type="synonym">AE5</name>
    <name evidence="7" type="ordered locus">At2g19730</name>
    <name evidence="8" type="ORF">F6F22.24</name>
</gene>
<protein>
    <recommendedName>
        <fullName evidence="5">Large ribosomal subunit protein eL28z</fullName>
    </recommendedName>
    <alternativeName>
        <fullName evidence="3">60S ribosomal protein L28-1</fullName>
    </alternativeName>
    <alternativeName>
        <fullName evidence="4">Protein ASYMMETRIC LEAVES1/2 ENHANCER 5</fullName>
    </alternativeName>
</protein>
<comment type="function">
    <text evidence="1 2">Component of the large ribosomal subunit (By similarity). Essential in leaf polarity establishment, probably having a role for translation in leaf dorsoventral patterning to specify leaf adaxial identity (PubMed:18305007).</text>
</comment>
<comment type="subunit">
    <text evidence="1">Component of the large ribosomal subunit.</text>
</comment>
<comment type="subcellular location">
    <subcellularLocation>
        <location evidence="2">Cytoplasm</location>
    </subcellularLocation>
    <subcellularLocation>
        <location evidence="2">Nucleus</location>
    </subcellularLocation>
    <subcellularLocation>
        <location evidence="2">Nucleus</location>
        <location evidence="2">Nucleolus</location>
    </subcellularLocation>
    <subcellularLocation>
        <location evidence="2">Nucleus</location>
        <location evidence="2">Nucleoplasm</location>
    </subcellularLocation>
</comment>
<comment type="tissue specificity">
    <text evidence="2">Expressed in seedlings, roots, stems, leaves, inflorescences and siliques.</text>
</comment>
<comment type="developmental stage">
    <text evidence="2">Detected in the embryo and leaf primordia at earlier developmental stages (PubMed:18305007). In reproductive organs, expressed in the inflorescence meristem, floral primordia and four types of young floral organs (PubMed:18305007).</text>
</comment>
<comment type="disruption phenotype">
    <text evidence="2">Pale green leaves and slightly longer early appearing leaves (PubMed:18305007). Delayed leaf growth and abnormal leaf patterning, with the abaxial mesophyll features appearing in the adaxial mesophyll domain (PubMed:18305007). More proximal vein branching in the petiole and reduced number of small veins at later leaf developmental stages (PubMed:18305007). Abnormal inflorescences terminating early and producing several secondary inflorescences (PubMed:18305007). Double mutant ae5-1 as2-101 exhibits an increased number of lotus- and needle-like leaves (PubMed:18305007). The double mutant ae5 as1/2 produces severe abaxialized leaves (PubMed:18305007).</text>
</comment>
<comment type="similarity">
    <text evidence="6">Belongs to the eukaryotic ribosomal protein eL28 family.</text>
</comment>